<comment type="function">
    <text evidence="1">Specifically methylates the guanine in position 1835 (m2G1835) of 23S rRNA.</text>
</comment>
<comment type="catalytic activity">
    <reaction evidence="1">
        <text>guanosine(1835) in 23S rRNA + S-adenosyl-L-methionine = N(2)-methylguanosine(1835) in 23S rRNA + S-adenosyl-L-homocysteine + H(+)</text>
        <dbReference type="Rhea" id="RHEA:42744"/>
        <dbReference type="Rhea" id="RHEA-COMP:10217"/>
        <dbReference type="Rhea" id="RHEA-COMP:10218"/>
        <dbReference type="ChEBI" id="CHEBI:15378"/>
        <dbReference type="ChEBI" id="CHEBI:57856"/>
        <dbReference type="ChEBI" id="CHEBI:59789"/>
        <dbReference type="ChEBI" id="CHEBI:74269"/>
        <dbReference type="ChEBI" id="CHEBI:74481"/>
        <dbReference type="EC" id="2.1.1.174"/>
    </reaction>
</comment>
<comment type="subcellular location">
    <subcellularLocation>
        <location evidence="1">Cytoplasm</location>
    </subcellularLocation>
</comment>
<comment type="similarity">
    <text evidence="1">Belongs to the methyltransferase superfamily. RlmG family.</text>
</comment>
<proteinExistence type="inferred from homology"/>
<evidence type="ECO:0000255" key="1">
    <source>
        <dbReference type="HAMAP-Rule" id="MF_01859"/>
    </source>
</evidence>
<gene>
    <name evidence="1" type="primary">rlmG</name>
    <name type="ordered locus">VV1_1819</name>
</gene>
<dbReference type="EC" id="2.1.1.174" evidence="1"/>
<dbReference type="EMBL" id="AE016795">
    <property type="protein sequence ID" value="AAO10225.1"/>
    <property type="molecule type" value="Genomic_DNA"/>
</dbReference>
<dbReference type="RefSeq" id="WP_011079725.1">
    <property type="nucleotide sequence ID" value="NC_004459.3"/>
</dbReference>
<dbReference type="SMR" id="Q8DBJ8"/>
<dbReference type="KEGG" id="vvu:VV1_1819"/>
<dbReference type="HOGENOM" id="CLU_040288_4_0_6"/>
<dbReference type="Proteomes" id="UP000002275">
    <property type="component" value="Chromosome 1"/>
</dbReference>
<dbReference type="GO" id="GO:0005737">
    <property type="term" value="C:cytoplasm"/>
    <property type="evidence" value="ECO:0007669"/>
    <property type="project" value="UniProtKB-SubCell"/>
</dbReference>
<dbReference type="GO" id="GO:0052916">
    <property type="term" value="F:23S rRNA (guanine(1835)-N(2))-methyltransferase activity"/>
    <property type="evidence" value="ECO:0007669"/>
    <property type="project" value="UniProtKB-EC"/>
</dbReference>
<dbReference type="GO" id="GO:0003676">
    <property type="term" value="F:nucleic acid binding"/>
    <property type="evidence" value="ECO:0007669"/>
    <property type="project" value="InterPro"/>
</dbReference>
<dbReference type="CDD" id="cd02440">
    <property type="entry name" value="AdoMet_MTases"/>
    <property type="match status" value="1"/>
</dbReference>
<dbReference type="Gene3D" id="3.40.50.150">
    <property type="entry name" value="Vaccinia Virus protein VP39"/>
    <property type="match status" value="2"/>
</dbReference>
<dbReference type="HAMAP" id="MF_01859">
    <property type="entry name" value="23SrRNA_methyltr_G"/>
    <property type="match status" value="1"/>
</dbReference>
<dbReference type="InterPro" id="IPR002052">
    <property type="entry name" value="DNA_methylase_N6_adenine_CS"/>
</dbReference>
<dbReference type="InterPro" id="IPR017237">
    <property type="entry name" value="rRNA_m2G-MeTrfase_RlmG"/>
</dbReference>
<dbReference type="InterPro" id="IPR046977">
    <property type="entry name" value="RsmC/RlmG"/>
</dbReference>
<dbReference type="InterPro" id="IPR029063">
    <property type="entry name" value="SAM-dependent_MTases_sf"/>
</dbReference>
<dbReference type="InterPro" id="IPR007848">
    <property type="entry name" value="Small_mtfrase_dom"/>
</dbReference>
<dbReference type="PANTHER" id="PTHR47816:SF5">
    <property type="entry name" value="RIBOSOMAL RNA LARGE SUBUNIT METHYLTRANSFERASE G"/>
    <property type="match status" value="1"/>
</dbReference>
<dbReference type="PANTHER" id="PTHR47816">
    <property type="entry name" value="RIBOSOMAL RNA SMALL SUBUNIT METHYLTRANSFERASE C"/>
    <property type="match status" value="1"/>
</dbReference>
<dbReference type="Pfam" id="PF05175">
    <property type="entry name" value="MTS"/>
    <property type="match status" value="1"/>
</dbReference>
<dbReference type="PIRSF" id="PIRSF037565">
    <property type="entry name" value="RRNA_m2G_Mtase_RsmD_prd"/>
    <property type="match status" value="1"/>
</dbReference>
<dbReference type="SUPFAM" id="SSF53335">
    <property type="entry name" value="S-adenosyl-L-methionine-dependent methyltransferases"/>
    <property type="match status" value="1"/>
</dbReference>
<name>RLMG_VIBVU</name>
<protein>
    <recommendedName>
        <fullName evidence="1">Ribosomal RNA large subunit methyltransferase G</fullName>
        <ecNumber evidence="1">2.1.1.174</ecNumber>
    </recommendedName>
    <alternativeName>
        <fullName evidence="1">23S rRNA m2G1835 methyltransferase</fullName>
    </alternativeName>
    <alternativeName>
        <fullName evidence="1">rRNA (guanine-N(2)-)-methyltransferase RlmG</fullName>
    </alternativeName>
</protein>
<keyword id="KW-0963">Cytoplasm</keyword>
<keyword id="KW-0489">Methyltransferase</keyword>
<keyword id="KW-0698">rRNA processing</keyword>
<keyword id="KW-0949">S-adenosyl-L-methionine</keyword>
<keyword id="KW-0808">Transferase</keyword>
<reference key="1">
    <citation type="submission" date="2002-12" db="EMBL/GenBank/DDBJ databases">
        <title>Complete genome sequence of Vibrio vulnificus CMCP6.</title>
        <authorList>
            <person name="Rhee J.H."/>
            <person name="Kim S.Y."/>
            <person name="Chung S.S."/>
            <person name="Kim J.J."/>
            <person name="Moon Y.H."/>
            <person name="Jeong H."/>
            <person name="Choy H.E."/>
        </authorList>
    </citation>
    <scope>NUCLEOTIDE SEQUENCE [LARGE SCALE GENOMIC DNA]</scope>
    <source>
        <strain>CMCP6</strain>
    </source>
</reference>
<feature type="chain" id="PRO_0000366536" description="Ribosomal RNA large subunit methyltransferase G">
    <location>
        <begin position="1"/>
        <end position="376"/>
    </location>
</feature>
<sequence>MKTELNLFDRQLTLFRYPNNANETLQAWDAGDEYLINYVEELALDTPQNILILNDHFGALSCWFSAQHQVTMMSDSFISQQGAKENLQRNQCREVKLLTTLDAIPTETSLVLFQLPKNNRHLTWQLTQLRKTLSPDVPVVAVNKAKEIHTSTLKLFEKYLGTTKTSLAWKKHRLVFCQADCAQMNDISPVTRWNVEEHKMTLNNLPNVYSGESLDLGARFMLEHIPQDDNLKHIIDLGCGNGVLSVKAAQLNPKAKFTLVDESYMAIESARLNLQENVTASVDAEYIANNCLDGFAGEIADLILCNPPFHQQQAITDHIAWQMFCDAKRVLKRGGKLQVIGNRHLGYDGKLKRLYGDKNVKLVASNSKFVILQATK</sequence>
<accession>Q8DBJ8</accession>
<organism>
    <name type="scientific">Vibrio vulnificus (strain CMCP6)</name>
    <dbReference type="NCBI Taxonomy" id="216895"/>
    <lineage>
        <taxon>Bacteria</taxon>
        <taxon>Pseudomonadati</taxon>
        <taxon>Pseudomonadota</taxon>
        <taxon>Gammaproteobacteria</taxon>
        <taxon>Vibrionales</taxon>
        <taxon>Vibrionaceae</taxon>
        <taxon>Vibrio</taxon>
    </lineage>
</organism>